<sequence length="483" mass="52924">MRSVTSLVSFSACLLASSVTAADTPLTVNGKKFYSQDIITRDVVVVGGGSSGCHIAVRLQDAGKSVVVVEKSARLGGHVATYTDPATRKTAEQGLVTFHNTTHVTDYLTRLDIPLAPISFSPSTNFDYDLRTGKPVNRTYNPTQEEFAAGFAGYSAQLAKYPQLNDGTFLPYPVPEDLTMPFGKFLEKYNLTGALMQMYNFNWGTGNFLTNPTVEQMRYWGANTVAAVTTGKFLVTARHNSSEIYTKVGNVLGATSSVLLNSEVTYTRRSEGKTGVQLIVKTPEGSKLLVAKKLVIAIPPKLDFVAPLDLSKTEKDLFGKYIDAGYYVGMVRNTGIPARTLITNSAQDTPYNLPVLPAVNIMNPTAIDGVWTVFSSSLQSKASFPWADDAVKADIIRSIKALQTANPDKFQQTEPEIIEWHSHAPYFLQVSSEEIKNGFYAKLYALQGLRNTHFTGAAWRVHDSSQIWKYTDTQVLPKLLAGL</sequence>
<name>OBLC_COCH5</name>
<feature type="signal peptide" evidence="3">
    <location>
        <begin position="1"/>
        <end position="21"/>
    </location>
</feature>
<feature type="chain" id="PRO_5004027862" description="FAD-dependent oxidoreductase oblC">
    <location>
        <begin position="22"/>
        <end position="483"/>
    </location>
</feature>
<feature type="glycosylation site" description="N-linked (GlcNAc...) asparagine" evidence="4">
    <location>
        <position position="100"/>
    </location>
</feature>
<feature type="glycosylation site" description="N-linked (GlcNAc...) asparagine" evidence="4">
    <location>
        <position position="137"/>
    </location>
</feature>
<feature type="glycosylation site" description="N-linked (GlcNAc...) asparagine" evidence="4">
    <location>
        <position position="190"/>
    </location>
</feature>
<feature type="glycosylation site" description="N-linked (GlcNAc...) asparagine" evidence="4">
    <location>
        <position position="240"/>
    </location>
</feature>
<reference key="1">
    <citation type="journal article" date="2012" name="PLoS Pathog.">
        <title>Diverse lifestyles and strategies of plant pathogenesis encoded in the genomes of eighteen Dothideomycetes fungi.</title>
        <authorList>
            <person name="Ohm R.A."/>
            <person name="Feau N."/>
            <person name="Henrissat B."/>
            <person name="Schoch C.L."/>
            <person name="Horwitz B.A."/>
            <person name="Barry K.W."/>
            <person name="Condon B.J."/>
            <person name="Copeland A.C."/>
            <person name="Dhillon B."/>
            <person name="Glaser F."/>
            <person name="Hesse C.N."/>
            <person name="Kosti I."/>
            <person name="LaButti K."/>
            <person name="Lindquist E.A."/>
            <person name="Lucas S."/>
            <person name="Salamov A.A."/>
            <person name="Bradshaw R.E."/>
            <person name="Ciuffetti L."/>
            <person name="Hamelin R.C."/>
            <person name="Kema G.H.J."/>
            <person name="Lawrence C."/>
            <person name="Scott J.A."/>
            <person name="Spatafora J.W."/>
            <person name="Turgeon B.G."/>
            <person name="de Wit P.J.G.M."/>
            <person name="Zhong S."/>
            <person name="Goodwin S.B."/>
            <person name="Grigoriev I.V."/>
        </authorList>
    </citation>
    <scope>NUCLEOTIDE SEQUENCE [LARGE SCALE GENOMIC DNA]</scope>
    <source>
        <strain>C5 / ATCC 48332 / race O</strain>
    </source>
</reference>
<reference key="2">
    <citation type="journal article" date="2013" name="PLoS Genet.">
        <title>Comparative genome structure, secondary metabolite, and effector coding capacity across Cochliobolus pathogens.</title>
        <authorList>
            <person name="Condon B.J."/>
            <person name="Leng Y."/>
            <person name="Wu D."/>
            <person name="Bushley K.E."/>
            <person name="Ohm R.A."/>
            <person name="Otillar R."/>
            <person name="Martin J."/>
            <person name="Schackwitz W."/>
            <person name="Grimwood J."/>
            <person name="MohdZainudin N."/>
            <person name="Xue C."/>
            <person name="Wang R."/>
            <person name="Manning V.A."/>
            <person name="Dhillon B."/>
            <person name="Tu Z.J."/>
            <person name="Steffenson B.J."/>
            <person name="Salamov A."/>
            <person name="Sun H."/>
            <person name="Lowry S."/>
            <person name="LaButti K."/>
            <person name="Han J."/>
            <person name="Copeland A."/>
            <person name="Lindquist E."/>
            <person name="Barry K."/>
            <person name="Schmutz J."/>
            <person name="Baker S.E."/>
            <person name="Ciuffetti L.M."/>
            <person name="Grigoriev I.V."/>
            <person name="Zhong S."/>
            <person name="Turgeon B.G."/>
        </authorList>
    </citation>
    <scope>NUCLEOTIDE SEQUENCE [LARGE SCALE GENOMIC DNA]</scope>
    <source>
        <strain>C5 / ATCC 48332 / race O</strain>
    </source>
</reference>
<reference key="3">
    <citation type="journal article" date="2016" name="Org. Lett.">
        <title>Multiple oxidative modifications in the ophiobolin biosynthesis: P450 oxidations found in genome mining.</title>
        <authorList>
            <person name="Narita K."/>
            <person name="Chiba R."/>
            <person name="Minami A."/>
            <person name="Kodama M."/>
            <person name="Fujii I."/>
            <person name="Gomi K."/>
            <person name="Oikawa H."/>
        </authorList>
    </citation>
    <scope>FUNCTION</scope>
    <scope>PATHWAY</scope>
</reference>
<proteinExistence type="inferred from homology"/>
<gene>
    <name evidence="6" type="primary">oblC</name>
    <name type="ORF">COCHEDRAFT_1167272</name>
</gene>
<evidence type="ECO:0000250" key="1">
    <source>
        <dbReference type="UniProtKB" id="A1C8C3"/>
    </source>
</evidence>
<evidence type="ECO:0000250" key="2">
    <source>
        <dbReference type="UniProtKB" id="B8NI10"/>
    </source>
</evidence>
<evidence type="ECO:0000255" key="3"/>
<evidence type="ECO:0000255" key="4">
    <source>
        <dbReference type="PROSITE-ProRule" id="PRU00498"/>
    </source>
</evidence>
<evidence type="ECO:0000269" key="5">
    <source>
    </source>
</evidence>
<evidence type="ECO:0000303" key="6">
    <source>
    </source>
</evidence>
<evidence type="ECO:0000305" key="7"/>
<evidence type="ECO:0000305" key="8">
    <source>
    </source>
</evidence>
<protein>
    <recommendedName>
        <fullName evidence="6">FAD-dependent oxidoreductase oblC</fullName>
        <ecNumber evidence="8">1.21.-.-</ecNumber>
    </recommendedName>
    <alternativeName>
        <fullName evidence="6">Ophiobolin biosynthesis cluster protein C</fullName>
    </alternativeName>
</protein>
<keyword id="KW-0274">FAD</keyword>
<keyword id="KW-0285">Flavoprotein</keyword>
<keyword id="KW-0325">Glycoprotein</keyword>
<keyword id="KW-0560">Oxidoreductase</keyword>
<keyword id="KW-1185">Reference proteome</keyword>
<keyword id="KW-0732">Signal</keyword>
<organism>
    <name type="scientific">Cochliobolus heterostrophus (strain C5 / ATCC 48332 / race O)</name>
    <name type="common">Southern corn leaf blight fungus</name>
    <name type="synonym">Bipolaris maydis</name>
    <dbReference type="NCBI Taxonomy" id="701091"/>
    <lineage>
        <taxon>Eukaryota</taxon>
        <taxon>Fungi</taxon>
        <taxon>Dikarya</taxon>
        <taxon>Ascomycota</taxon>
        <taxon>Pezizomycotina</taxon>
        <taxon>Dothideomycetes</taxon>
        <taxon>Pleosporomycetidae</taxon>
        <taxon>Pleosporales</taxon>
        <taxon>Pleosporineae</taxon>
        <taxon>Pleosporaceae</taxon>
        <taxon>Bipolaris</taxon>
    </lineage>
</organism>
<dbReference type="EC" id="1.21.-.-" evidence="8"/>
<dbReference type="EMBL" id="KB445570">
    <property type="protein sequence ID" value="EMD96236.1"/>
    <property type="molecule type" value="Genomic_DNA"/>
</dbReference>
<dbReference type="SMR" id="M2URK9"/>
<dbReference type="STRING" id="701091.M2URK9"/>
<dbReference type="GlyCosmos" id="M2URK9">
    <property type="glycosylation" value="4 sites, No reported glycans"/>
</dbReference>
<dbReference type="eggNOG" id="ENOG502R1TU">
    <property type="taxonomic scope" value="Eukaryota"/>
</dbReference>
<dbReference type="HOGENOM" id="CLU_028280_0_0_1"/>
<dbReference type="OMA" id="FRSHAPY"/>
<dbReference type="OrthoDB" id="18987at28556"/>
<dbReference type="UniPathway" id="UPA00213"/>
<dbReference type="Proteomes" id="UP000016936">
    <property type="component" value="Unassembled WGS sequence"/>
</dbReference>
<dbReference type="GO" id="GO:0016491">
    <property type="term" value="F:oxidoreductase activity"/>
    <property type="evidence" value="ECO:0007669"/>
    <property type="project" value="UniProtKB-KW"/>
</dbReference>
<dbReference type="GO" id="GO:0016114">
    <property type="term" value="P:terpenoid biosynthetic process"/>
    <property type="evidence" value="ECO:0007669"/>
    <property type="project" value="UniProtKB-UniPathway"/>
</dbReference>
<dbReference type="Gene3D" id="1.10.405.20">
    <property type="match status" value="1"/>
</dbReference>
<dbReference type="Gene3D" id="3.30.70.1990">
    <property type="match status" value="1"/>
</dbReference>
<dbReference type="Gene3D" id="3.50.50.60">
    <property type="entry name" value="FAD/NAD(P)-binding domain"/>
    <property type="match status" value="1"/>
</dbReference>
<dbReference type="InterPro" id="IPR002937">
    <property type="entry name" value="Amino_oxidase"/>
</dbReference>
<dbReference type="InterPro" id="IPR036188">
    <property type="entry name" value="FAD/NAD-bd_sf"/>
</dbReference>
<dbReference type="InterPro" id="IPR050281">
    <property type="entry name" value="Flavin_monoamine_oxidase"/>
</dbReference>
<dbReference type="PANTHER" id="PTHR10742:SF419">
    <property type="entry name" value="AMINE OXIDASE DOMAIN-CONTAINING PROTEIN-RELATED"/>
    <property type="match status" value="1"/>
</dbReference>
<dbReference type="PANTHER" id="PTHR10742">
    <property type="entry name" value="FLAVIN MONOAMINE OXIDASE"/>
    <property type="match status" value="1"/>
</dbReference>
<dbReference type="Pfam" id="PF01593">
    <property type="entry name" value="Amino_oxidase"/>
    <property type="match status" value="1"/>
</dbReference>
<dbReference type="SUPFAM" id="SSF51905">
    <property type="entry name" value="FAD/NAD(P)-binding domain"/>
    <property type="match status" value="1"/>
</dbReference>
<accession>M2URK9</accession>
<comment type="function">
    <text evidence="1 5 8">FAD-dependent oxidoreductase; part of the gene cluster that mediates the biosynthesis of the sesterterpenes ophiobolins, fungal phytotoxins with potential anti-cancer activities (PubMed:27116000). The first step of the pathway is performed by the sesterterpene synthase oblA that possesses both prenyl transferase and terpene cyclase activity, converting isopentenyl diphosphate and dimethylallyl diphosphate into geranylfarnesyl diphosphate (GFPP) and further converting GFPP into ophiobolin F, respectively (By similarity). Other sesterterpenoids (C(25) terpenoids) are found as minor products of oblA (By similarity). The cytochrome P450 monooxygenase oblB then catalyzes a four-step oxidative transformation of ophiobolin F to yield ophiobolin C (PubMed:27116000). The FAD-dependent oxidoreductase oblC might be involved in a later oxidation step that produces ophiobolin A (Probable).</text>
</comment>
<comment type="cofactor">
    <cofactor evidence="2">
        <name>FAD</name>
        <dbReference type="ChEBI" id="CHEBI:57692"/>
    </cofactor>
</comment>
<comment type="pathway">
    <text evidence="8">Secondary metabolite biosynthesis; terpenoid biosynthesis.</text>
</comment>
<comment type="similarity">
    <text evidence="7">Belongs to the beta-cyclopiazonate dehydrogenase family.</text>
</comment>